<accession>Q48328</accession>
<accession>D4GYV0</accession>
<gene>
    <name type="primary">radA</name>
    <name type="ordered locus">HVO_0104</name>
</gene>
<feature type="chain" id="PRO_0000150093" description="DNA repair and recombination protein RadA">
    <location>
        <begin position="1"/>
        <end position="343"/>
    </location>
</feature>
<feature type="binding site" evidence="1">
    <location>
        <begin position="107"/>
        <end position="114"/>
    </location>
    <ligand>
        <name>ATP</name>
        <dbReference type="ChEBI" id="CHEBI:30616"/>
    </ligand>
</feature>
<sequence length="343" mass="37320">MAEDDLESLPGVGPATADKLVESGYDSYQSIAVASPGELSNKADIGSSTASDIINAARDAADVGGFETGSMVLERRQQIGKLSWQIDEVDELLGGGLETQSITEVYGEFGAGKSQITHQLAVNVQLPPEQGGLGGGCIFIDSEDTFRPERIDDMVRGLEDEALEATLDDREMEGSIDDEETIKALVDDFLDKIHVAKAFNSNHQILLAEKAKELAGEHEDTEWPVRLLCVDSLTAHFRAEYVGRGELAERQQKLNKHLHDLMRIGDLFNTGILVTNQVSSNPDSYFGDPTQPIGGNILGHTSTFRIYLRKSKGDKRIVRLVDAPNLADGEAIMRVQDAGLKPE</sequence>
<evidence type="ECO:0000255" key="1"/>
<evidence type="ECO:0000269" key="2">
    <source>
    </source>
</evidence>
<evidence type="ECO:0000305" key="3"/>
<name>RADA_HALVD</name>
<protein>
    <recommendedName>
        <fullName>DNA repair and recombination protein RadA</fullName>
    </recommendedName>
</protein>
<keyword id="KW-0067">ATP-binding</keyword>
<keyword id="KW-0227">DNA damage</keyword>
<keyword id="KW-0233">DNA recombination</keyword>
<keyword id="KW-0238">DNA-binding</keyword>
<keyword id="KW-0547">Nucleotide-binding</keyword>
<keyword id="KW-1185">Reference proteome</keyword>
<proteinExistence type="inferred from homology"/>
<comment type="function">
    <text evidence="2 3">Involved in DNA repair and in homologous recombination. Binds and assembles on single-stranded DNA to form a nucleoprotein filament. Hydrolyzes ATP in a ssDNA-dependent manner and promotes DNA strand exchange between homologous DNA molecules (Probable). In addition to its role in homologous recombination plays a critical role in maintenance and/or replication of some plasmids, but not in plasmid transformation.</text>
</comment>
<comment type="disruption phenotype">
    <text evidence="2">Decreased growth rate, loss of homologous recombination, increased sensitivity to DNA damaging agents such as UV light and ethylmethane sulfonate (EMS). Loss of maintenance and/or replication of pHH1 and pHV2 (but not pHK2) replicon-containing plasmids.</text>
</comment>
<comment type="similarity">
    <text evidence="3">Belongs to the eukaryotic RecA-like protein family.</text>
</comment>
<dbReference type="EMBL" id="U45311">
    <property type="protein sequence ID" value="AAC44121.1"/>
    <property type="molecule type" value="Genomic_DNA"/>
</dbReference>
<dbReference type="EMBL" id="CP001956">
    <property type="protein sequence ID" value="ADE02303.1"/>
    <property type="molecule type" value="Genomic_DNA"/>
</dbReference>
<dbReference type="PIR" id="S71094">
    <property type="entry name" value="S71094"/>
</dbReference>
<dbReference type="RefSeq" id="WP_004045193.1">
    <property type="nucleotide sequence ID" value="NC_013967.1"/>
</dbReference>
<dbReference type="SMR" id="Q48328"/>
<dbReference type="IntAct" id="Q48328">
    <property type="interactions" value="15"/>
</dbReference>
<dbReference type="STRING" id="309800.HVO_0104"/>
<dbReference type="PaxDb" id="309800-C498_18758"/>
<dbReference type="EnsemblBacteria" id="ADE02303">
    <property type="protein sequence ID" value="ADE02303"/>
    <property type="gene ID" value="HVO_0104"/>
</dbReference>
<dbReference type="GeneID" id="8924867"/>
<dbReference type="KEGG" id="hvo:HVO_0104"/>
<dbReference type="eggNOG" id="arCOG00415">
    <property type="taxonomic scope" value="Archaea"/>
</dbReference>
<dbReference type="HOGENOM" id="CLU_041732_0_0_2"/>
<dbReference type="OrthoDB" id="31129at2157"/>
<dbReference type="BRENDA" id="3.6.4.B7">
    <property type="organism ID" value="2561"/>
</dbReference>
<dbReference type="Proteomes" id="UP000008243">
    <property type="component" value="Chromosome"/>
</dbReference>
<dbReference type="GO" id="GO:0005524">
    <property type="term" value="F:ATP binding"/>
    <property type="evidence" value="ECO:0007669"/>
    <property type="project" value="UniProtKB-UniRule"/>
</dbReference>
<dbReference type="GO" id="GO:0016887">
    <property type="term" value="F:ATP hydrolysis activity"/>
    <property type="evidence" value="ECO:0007669"/>
    <property type="project" value="InterPro"/>
</dbReference>
<dbReference type="GO" id="GO:0140664">
    <property type="term" value="F:ATP-dependent DNA damage sensor activity"/>
    <property type="evidence" value="ECO:0007669"/>
    <property type="project" value="InterPro"/>
</dbReference>
<dbReference type="GO" id="GO:0003684">
    <property type="term" value="F:damaged DNA binding"/>
    <property type="evidence" value="ECO:0007669"/>
    <property type="project" value="UniProtKB-UniRule"/>
</dbReference>
<dbReference type="GO" id="GO:0006310">
    <property type="term" value="P:DNA recombination"/>
    <property type="evidence" value="ECO:0007669"/>
    <property type="project" value="UniProtKB-UniRule"/>
</dbReference>
<dbReference type="GO" id="GO:0006281">
    <property type="term" value="P:DNA repair"/>
    <property type="evidence" value="ECO:0007669"/>
    <property type="project" value="UniProtKB-UniRule"/>
</dbReference>
<dbReference type="Gene3D" id="1.10.150.20">
    <property type="entry name" value="5' to 3' exonuclease, C-terminal subdomain"/>
    <property type="match status" value="1"/>
</dbReference>
<dbReference type="Gene3D" id="3.40.50.300">
    <property type="entry name" value="P-loop containing nucleotide triphosphate hydrolases"/>
    <property type="match status" value="1"/>
</dbReference>
<dbReference type="HAMAP" id="MF_00348">
    <property type="entry name" value="RadA_arch"/>
    <property type="match status" value="1"/>
</dbReference>
<dbReference type="InterPro" id="IPR003593">
    <property type="entry name" value="AAA+_ATPase"/>
</dbReference>
<dbReference type="InterPro" id="IPR013632">
    <property type="entry name" value="DNA_recomb/repair_Rad51_C"/>
</dbReference>
<dbReference type="InterPro" id="IPR011938">
    <property type="entry name" value="DNA_recomb/repair_RadA"/>
</dbReference>
<dbReference type="InterPro" id="IPR016467">
    <property type="entry name" value="DNA_recomb/repair_RecA-like"/>
</dbReference>
<dbReference type="InterPro" id="IPR010995">
    <property type="entry name" value="DNA_repair_Rad51/TF_NusA_a-hlx"/>
</dbReference>
<dbReference type="InterPro" id="IPR003583">
    <property type="entry name" value="Hlx-hairpin-Hlx_DNA-bd_motif"/>
</dbReference>
<dbReference type="InterPro" id="IPR027417">
    <property type="entry name" value="P-loop_NTPase"/>
</dbReference>
<dbReference type="InterPro" id="IPR020588">
    <property type="entry name" value="RecA_ATP-bd"/>
</dbReference>
<dbReference type="InterPro" id="IPR020587">
    <property type="entry name" value="RecA_monomer-monomer_interface"/>
</dbReference>
<dbReference type="NCBIfam" id="NF003301">
    <property type="entry name" value="PRK04301.1"/>
    <property type="match status" value="1"/>
</dbReference>
<dbReference type="NCBIfam" id="TIGR02236">
    <property type="entry name" value="recomb_radA"/>
    <property type="match status" value="1"/>
</dbReference>
<dbReference type="PANTHER" id="PTHR22942:SF30">
    <property type="entry name" value="MEIOTIC RECOMBINATION PROTEIN DMC1_LIM15 HOMOLOG"/>
    <property type="match status" value="1"/>
</dbReference>
<dbReference type="PANTHER" id="PTHR22942">
    <property type="entry name" value="RECA/RAD51/RADA DNA STRAND-PAIRING FAMILY MEMBER"/>
    <property type="match status" value="1"/>
</dbReference>
<dbReference type="Pfam" id="PF14520">
    <property type="entry name" value="HHH_5"/>
    <property type="match status" value="1"/>
</dbReference>
<dbReference type="Pfam" id="PF08423">
    <property type="entry name" value="Rad51"/>
    <property type="match status" value="2"/>
</dbReference>
<dbReference type="PIRSF" id="PIRSF005856">
    <property type="entry name" value="Rad51"/>
    <property type="match status" value="1"/>
</dbReference>
<dbReference type="SMART" id="SM00382">
    <property type="entry name" value="AAA"/>
    <property type="match status" value="1"/>
</dbReference>
<dbReference type="SMART" id="SM00278">
    <property type="entry name" value="HhH1"/>
    <property type="match status" value="2"/>
</dbReference>
<dbReference type="SUPFAM" id="SSF52540">
    <property type="entry name" value="P-loop containing nucleoside triphosphate hydrolases"/>
    <property type="match status" value="1"/>
</dbReference>
<dbReference type="SUPFAM" id="SSF47794">
    <property type="entry name" value="Rad51 N-terminal domain-like"/>
    <property type="match status" value="1"/>
</dbReference>
<dbReference type="PROSITE" id="PS50162">
    <property type="entry name" value="RECA_2"/>
    <property type="match status" value="1"/>
</dbReference>
<dbReference type="PROSITE" id="PS50163">
    <property type="entry name" value="RECA_3"/>
    <property type="match status" value="1"/>
</dbReference>
<reference key="1">
    <citation type="journal article" date="1996" name="Nucleic Acids Res.">
        <title>recA-like genes from three archaean species with putative protein products similar to Rad51 and Dmc1 proteins of the yeast Saccharomyces cerevisiae.</title>
        <authorList>
            <person name="Sandler S.J."/>
            <person name="Satin L.H."/>
            <person name="Samra H.S."/>
            <person name="Clark A.J."/>
        </authorList>
    </citation>
    <scope>NUCLEOTIDE SEQUENCE [GENOMIC DNA]</scope>
    <source>
        <strain>DS2 / DSM 5716 / WFD11</strain>
    </source>
</reference>
<reference key="2">
    <citation type="journal article" date="2010" name="PLoS ONE">
        <title>The complete genome sequence of Haloferax volcanii DS2, a model archaeon.</title>
        <authorList>
            <person name="Hartman A.L."/>
            <person name="Norais C."/>
            <person name="Badger J.H."/>
            <person name="Delmas S."/>
            <person name="Haldenby S."/>
            <person name="Madupu R."/>
            <person name="Robinson J."/>
            <person name="Khouri H."/>
            <person name="Ren Q."/>
            <person name="Lowe T.M."/>
            <person name="Maupin-Furlow J."/>
            <person name="Pohlschroder M."/>
            <person name="Daniels C."/>
            <person name="Pfeiffer F."/>
            <person name="Allers T."/>
            <person name="Eisen J.A."/>
        </authorList>
    </citation>
    <scope>NUCLEOTIDE SEQUENCE [LARGE SCALE GENOMIC DNA]</scope>
    <source>
        <strain>ATCC 29605 / DSM 3757 / JCM 8879 / NBRC 14742 / NCIMB 2012 / VKM B-1768 / DS2</strain>
    </source>
</reference>
<reference key="3">
    <citation type="journal article" date="1997" name="Mol. Microbiol.">
        <title>Construction and analysis of a recombination-deficient (radA) mutant of Haloferax volcanii.</title>
        <authorList>
            <person name="Woods W.G."/>
            <person name="Dyall-Smith M.L."/>
        </authorList>
    </citation>
    <scope>FUNCTION</scope>
    <scope>DISRUPTION PHENOTYPE</scope>
    <source>
        <strain>DS2 / DSM 5716 / WFD11</strain>
    </source>
</reference>
<organism>
    <name type="scientific">Haloferax volcanii (strain ATCC 29605 / DSM 3757 / JCM 8879 / NBRC 14742 / NCIMB 2012 / VKM B-1768 / DS2)</name>
    <name type="common">Halobacterium volcanii</name>
    <dbReference type="NCBI Taxonomy" id="309800"/>
    <lineage>
        <taxon>Archaea</taxon>
        <taxon>Methanobacteriati</taxon>
        <taxon>Methanobacteriota</taxon>
        <taxon>Stenosarchaea group</taxon>
        <taxon>Halobacteria</taxon>
        <taxon>Halobacteriales</taxon>
        <taxon>Haloferacaceae</taxon>
        <taxon>Haloferax</taxon>
    </lineage>
</organism>